<feature type="chain" id="PRO_0000140774" description="3-dehydroquinate synthase">
    <location>
        <begin position="1"/>
        <end position="375"/>
    </location>
</feature>
<feature type="binding site" evidence="1">
    <location>
        <begin position="82"/>
        <end position="87"/>
    </location>
    <ligand>
        <name>NAD(+)</name>
        <dbReference type="ChEBI" id="CHEBI:57540"/>
    </ligand>
</feature>
<feature type="binding site" evidence="1">
    <location>
        <begin position="116"/>
        <end position="120"/>
    </location>
    <ligand>
        <name>NAD(+)</name>
        <dbReference type="ChEBI" id="CHEBI:57540"/>
    </ligand>
</feature>
<feature type="binding site" evidence="1">
    <location>
        <begin position="140"/>
        <end position="141"/>
    </location>
    <ligand>
        <name>NAD(+)</name>
        <dbReference type="ChEBI" id="CHEBI:57540"/>
    </ligand>
</feature>
<feature type="binding site" evidence="1">
    <location>
        <position position="153"/>
    </location>
    <ligand>
        <name>NAD(+)</name>
        <dbReference type="ChEBI" id="CHEBI:57540"/>
    </ligand>
</feature>
<feature type="binding site" evidence="1">
    <location>
        <position position="162"/>
    </location>
    <ligand>
        <name>NAD(+)</name>
        <dbReference type="ChEBI" id="CHEBI:57540"/>
    </ligand>
</feature>
<feature type="binding site" evidence="1">
    <location>
        <position position="195"/>
    </location>
    <ligand>
        <name>Zn(2+)</name>
        <dbReference type="ChEBI" id="CHEBI:29105"/>
    </ligand>
</feature>
<feature type="binding site" evidence="1">
    <location>
        <position position="259"/>
    </location>
    <ligand>
        <name>Zn(2+)</name>
        <dbReference type="ChEBI" id="CHEBI:29105"/>
    </ligand>
</feature>
<feature type="binding site" evidence="1">
    <location>
        <position position="276"/>
    </location>
    <ligand>
        <name>Zn(2+)</name>
        <dbReference type="ChEBI" id="CHEBI:29105"/>
    </ligand>
</feature>
<proteinExistence type="inferred from homology"/>
<organism>
    <name type="scientific">Rhodopirellula baltica (strain DSM 10527 / NCIMB 13988 / SH1)</name>
    <dbReference type="NCBI Taxonomy" id="243090"/>
    <lineage>
        <taxon>Bacteria</taxon>
        <taxon>Pseudomonadati</taxon>
        <taxon>Planctomycetota</taxon>
        <taxon>Planctomycetia</taxon>
        <taxon>Pirellulales</taxon>
        <taxon>Pirellulaceae</taxon>
        <taxon>Rhodopirellula</taxon>
    </lineage>
</organism>
<reference key="1">
    <citation type="journal article" date="2003" name="Proc. Natl. Acad. Sci. U.S.A.">
        <title>Complete genome sequence of the marine planctomycete Pirellula sp. strain 1.</title>
        <authorList>
            <person name="Gloeckner F.O."/>
            <person name="Kube M."/>
            <person name="Bauer M."/>
            <person name="Teeling H."/>
            <person name="Lombardot T."/>
            <person name="Ludwig W."/>
            <person name="Gade D."/>
            <person name="Beck A."/>
            <person name="Borzym K."/>
            <person name="Heitmann K."/>
            <person name="Rabus R."/>
            <person name="Schlesner H."/>
            <person name="Amann R."/>
            <person name="Reinhardt R."/>
        </authorList>
    </citation>
    <scope>NUCLEOTIDE SEQUENCE [LARGE SCALE GENOMIC DNA]</scope>
    <source>
        <strain>DSM 10527 / NCIMB 13988 / SH1</strain>
    </source>
</reference>
<sequence length="375" mass="40631">MTEPIESIEVSLGDRSYPIWISTGLTESAEQPHFAKHFQAAVGDCTHVVLIHDAAVSNTIASRVEKQLEQAGIRITSISIPSGETSKSVSKLESIWNVMLESGTDRRSVVVAVGGGVVGDLAGFAAASFTRGLRFVQVPTTLLSMVDSSVGGKTGINLPGGKNMVGSFWQPQMVWIDTQSLSTLPDRDFISGMAEVIKYGVIEDAEFFCWLQDKAARLIEKDPETLRYAIRKSCESKARVVAEDERETSGRRAILNYGHTFAHAIEATAGYGVCLHGEAVSIGMQMAAHLAIDMELCDRSLLEEQTAVLSAAKLPLAWKDADPEKMLPVMSHDKKVSHGKLRFVLPDRIGHVAMVGDVPSEKVIAAILACRDEPN</sequence>
<gene>
    <name evidence="1" type="primary">aroB</name>
    <name type="ordered locus">RB1898</name>
</gene>
<name>AROB_RHOBA</name>
<protein>
    <recommendedName>
        <fullName evidence="1">3-dehydroquinate synthase</fullName>
        <shortName evidence="1">DHQS</shortName>
        <ecNumber evidence="1">4.2.3.4</ecNumber>
    </recommendedName>
</protein>
<dbReference type="EC" id="4.2.3.4" evidence="1"/>
<dbReference type="EMBL" id="BX294136">
    <property type="protein sequence ID" value="CAD72324.1"/>
    <property type="status" value="ALT_INIT"/>
    <property type="molecule type" value="Genomic_DNA"/>
</dbReference>
<dbReference type="RefSeq" id="NP_864643.1">
    <property type="nucleotide sequence ID" value="NC_005027.1"/>
</dbReference>
<dbReference type="SMR" id="Q7UWN8"/>
<dbReference type="FunCoup" id="Q7UWN8">
    <property type="interactions" value="508"/>
</dbReference>
<dbReference type="STRING" id="243090.RB1898"/>
<dbReference type="EnsemblBacteria" id="CAD72324">
    <property type="protein sequence ID" value="CAD72324"/>
    <property type="gene ID" value="RB1898"/>
</dbReference>
<dbReference type="KEGG" id="rba:RB1898"/>
<dbReference type="PATRIC" id="fig|243090.15.peg.873"/>
<dbReference type="eggNOG" id="COG0337">
    <property type="taxonomic scope" value="Bacteria"/>
</dbReference>
<dbReference type="HOGENOM" id="CLU_001201_0_2_0"/>
<dbReference type="InParanoid" id="Q7UWN8"/>
<dbReference type="OrthoDB" id="9806583at2"/>
<dbReference type="UniPathway" id="UPA00053">
    <property type="reaction ID" value="UER00085"/>
</dbReference>
<dbReference type="Proteomes" id="UP000001025">
    <property type="component" value="Chromosome"/>
</dbReference>
<dbReference type="GO" id="GO:0005737">
    <property type="term" value="C:cytoplasm"/>
    <property type="evidence" value="ECO:0007669"/>
    <property type="project" value="UniProtKB-SubCell"/>
</dbReference>
<dbReference type="GO" id="GO:0003856">
    <property type="term" value="F:3-dehydroquinate synthase activity"/>
    <property type="evidence" value="ECO:0000318"/>
    <property type="project" value="GO_Central"/>
</dbReference>
<dbReference type="GO" id="GO:0046872">
    <property type="term" value="F:metal ion binding"/>
    <property type="evidence" value="ECO:0007669"/>
    <property type="project" value="UniProtKB-KW"/>
</dbReference>
<dbReference type="GO" id="GO:0000166">
    <property type="term" value="F:nucleotide binding"/>
    <property type="evidence" value="ECO:0007669"/>
    <property type="project" value="UniProtKB-KW"/>
</dbReference>
<dbReference type="GO" id="GO:0008652">
    <property type="term" value="P:amino acid biosynthetic process"/>
    <property type="evidence" value="ECO:0007669"/>
    <property type="project" value="UniProtKB-KW"/>
</dbReference>
<dbReference type="GO" id="GO:0009073">
    <property type="term" value="P:aromatic amino acid family biosynthetic process"/>
    <property type="evidence" value="ECO:0000318"/>
    <property type="project" value="GO_Central"/>
</dbReference>
<dbReference type="GO" id="GO:0009423">
    <property type="term" value="P:chorismate biosynthetic process"/>
    <property type="evidence" value="ECO:0007669"/>
    <property type="project" value="UniProtKB-UniRule"/>
</dbReference>
<dbReference type="CDD" id="cd08195">
    <property type="entry name" value="DHQS"/>
    <property type="match status" value="1"/>
</dbReference>
<dbReference type="FunFam" id="1.20.1090.10:FF:000045">
    <property type="entry name" value="3-dehydroquinate synthase"/>
    <property type="match status" value="1"/>
</dbReference>
<dbReference type="FunFam" id="3.40.50.1970:FF:000001">
    <property type="entry name" value="3-dehydroquinate synthase"/>
    <property type="match status" value="1"/>
</dbReference>
<dbReference type="Gene3D" id="3.40.50.1970">
    <property type="match status" value="1"/>
</dbReference>
<dbReference type="Gene3D" id="1.20.1090.10">
    <property type="entry name" value="Dehydroquinate synthase-like - alpha domain"/>
    <property type="match status" value="1"/>
</dbReference>
<dbReference type="HAMAP" id="MF_00110">
    <property type="entry name" value="DHQ_synthase"/>
    <property type="match status" value="1"/>
</dbReference>
<dbReference type="InterPro" id="IPR050071">
    <property type="entry name" value="Dehydroquinate_synthase"/>
</dbReference>
<dbReference type="InterPro" id="IPR016037">
    <property type="entry name" value="DHQ_synth_AroB"/>
</dbReference>
<dbReference type="InterPro" id="IPR030963">
    <property type="entry name" value="DHQ_synth_fam"/>
</dbReference>
<dbReference type="InterPro" id="IPR030960">
    <property type="entry name" value="DHQS/DOIS_N"/>
</dbReference>
<dbReference type="InterPro" id="IPR056179">
    <property type="entry name" value="DHQS_C"/>
</dbReference>
<dbReference type="NCBIfam" id="TIGR01357">
    <property type="entry name" value="aroB"/>
    <property type="match status" value="1"/>
</dbReference>
<dbReference type="PANTHER" id="PTHR43622">
    <property type="entry name" value="3-DEHYDROQUINATE SYNTHASE"/>
    <property type="match status" value="1"/>
</dbReference>
<dbReference type="PANTHER" id="PTHR43622:SF7">
    <property type="entry name" value="3-DEHYDROQUINATE SYNTHASE, CHLOROPLASTIC"/>
    <property type="match status" value="1"/>
</dbReference>
<dbReference type="Pfam" id="PF01761">
    <property type="entry name" value="DHQ_synthase"/>
    <property type="match status" value="1"/>
</dbReference>
<dbReference type="Pfam" id="PF24621">
    <property type="entry name" value="DHQS_C"/>
    <property type="match status" value="1"/>
</dbReference>
<dbReference type="PIRSF" id="PIRSF001455">
    <property type="entry name" value="DHQ_synth"/>
    <property type="match status" value="1"/>
</dbReference>
<dbReference type="SUPFAM" id="SSF56796">
    <property type="entry name" value="Dehydroquinate synthase-like"/>
    <property type="match status" value="1"/>
</dbReference>
<evidence type="ECO:0000255" key="1">
    <source>
        <dbReference type="HAMAP-Rule" id="MF_00110"/>
    </source>
</evidence>
<evidence type="ECO:0000305" key="2"/>
<comment type="function">
    <text evidence="1">Catalyzes the conversion of 3-deoxy-D-arabino-heptulosonate 7-phosphate (DAHP) to dehydroquinate (DHQ).</text>
</comment>
<comment type="catalytic activity">
    <reaction evidence="1">
        <text>7-phospho-2-dehydro-3-deoxy-D-arabino-heptonate = 3-dehydroquinate + phosphate</text>
        <dbReference type="Rhea" id="RHEA:21968"/>
        <dbReference type="ChEBI" id="CHEBI:32364"/>
        <dbReference type="ChEBI" id="CHEBI:43474"/>
        <dbReference type="ChEBI" id="CHEBI:58394"/>
        <dbReference type="EC" id="4.2.3.4"/>
    </reaction>
</comment>
<comment type="cofactor">
    <cofactor evidence="1">
        <name>NAD(+)</name>
        <dbReference type="ChEBI" id="CHEBI:57540"/>
    </cofactor>
</comment>
<comment type="cofactor">
    <cofactor evidence="1">
        <name>Co(2+)</name>
        <dbReference type="ChEBI" id="CHEBI:48828"/>
    </cofactor>
    <cofactor evidence="1">
        <name>Zn(2+)</name>
        <dbReference type="ChEBI" id="CHEBI:29105"/>
    </cofactor>
    <text evidence="1">Binds 1 divalent metal cation per subunit. Can use either Co(2+) or Zn(2+).</text>
</comment>
<comment type="pathway">
    <text evidence="1">Metabolic intermediate biosynthesis; chorismate biosynthesis; chorismate from D-erythrose 4-phosphate and phosphoenolpyruvate: step 2/7.</text>
</comment>
<comment type="subcellular location">
    <subcellularLocation>
        <location evidence="1">Cytoplasm</location>
    </subcellularLocation>
</comment>
<comment type="similarity">
    <text evidence="1">Belongs to the sugar phosphate cyclases superfamily. Dehydroquinate synthase family.</text>
</comment>
<comment type="sequence caution" evidence="2">
    <conflict type="erroneous initiation">
        <sequence resource="EMBL-CDS" id="CAD72324"/>
    </conflict>
</comment>
<accession>Q7UWN8</accession>
<keyword id="KW-0028">Amino-acid biosynthesis</keyword>
<keyword id="KW-0057">Aromatic amino acid biosynthesis</keyword>
<keyword id="KW-0170">Cobalt</keyword>
<keyword id="KW-0963">Cytoplasm</keyword>
<keyword id="KW-0456">Lyase</keyword>
<keyword id="KW-0479">Metal-binding</keyword>
<keyword id="KW-0520">NAD</keyword>
<keyword id="KW-0547">Nucleotide-binding</keyword>
<keyword id="KW-1185">Reference proteome</keyword>
<keyword id="KW-0862">Zinc</keyword>